<name>NUOH_GEOSW</name>
<reference key="1">
    <citation type="submission" date="2009-06" db="EMBL/GenBank/DDBJ databases">
        <title>Complete sequence of chromosome of Geopacillus sp. WCH70.</title>
        <authorList>
            <consortium name="US DOE Joint Genome Institute"/>
            <person name="Lucas S."/>
            <person name="Copeland A."/>
            <person name="Lapidus A."/>
            <person name="Glavina del Rio T."/>
            <person name="Dalin E."/>
            <person name="Tice H."/>
            <person name="Bruce D."/>
            <person name="Goodwin L."/>
            <person name="Pitluck S."/>
            <person name="Chertkov O."/>
            <person name="Brettin T."/>
            <person name="Detter J.C."/>
            <person name="Han C."/>
            <person name="Larimer F."/>
            <person name="Land M."/>
            <person name="Hauser L."/>
            <person name="Kyrpides N."/>
            <person name="Mikhailova N."/>
            <person name="Brumm P."/>
            <person name="Mead D.A."/>
            <person name="Richardson P."/>
        </authorList>
    </citation>
    <scope>NUCLEOTIDE SEQUENCE [LARGE SCALE GENOMIC DNA]</scope>
    <source>
        <strain>WCH70</strain>
    </source>
</reference>
<gene>
    <name evidence="1" type="primary">nuoH</name>
    <name type="ordered locus">GWCH70_3297</name>
</gene>
<comment type="function">
    <text evidence="1">NDH-1 shuttles electrons from NADH, via FMN and iron-sulfur (Fe-S) centers, to quinones in the respiratory chain. The immediate electron acceptor for the enzyme in this species is believed to be ubiquinone. Couples the redox reaction to proton translocation (for every two electrons transferred, four hydrogen ions are translocated across the cytoplasmic membrane), and thus conserves the redox energy in a proton gradient. This subunit may bind ubiquinone.</text>
</comment>
<comment type="catalytic activity">
    <reaction evidence="1">
        <text>a quinone + NADH + 5 H(+)(in) = a quinol + NAD(+) + 4 H(+)(out)</text>
        <dbReference type="Rhea" id="RHEA:57888"/>
        <dbReference type="ChEBI" id="CHEBI:15378"/>
        <dbReference type="ChEBI" id="CHEBI:24646"/>
        <dbReference type="ChEBI" id="CHEBI:57540"/>
        <dbReference type="ChEBI" id="CHEBI:57945"/>
        <dbReference type="ChEBI" id="CHEBI:132124"/>
    </reaction>
</comment>
<comment type="subunit">
    <text evidence="1">NDH-1 is composed of 14 different subunits. Subunits NuoA, H, J, K, L, M, N constitute the membrane sector of the complex.</text>
</comment>
<comment type="subcellular location">
    <subcellularLocation>
        <location evidence="1">Cell membrane</location>
        <topology evidence="1">Multi-pass membrane protein</topology>
    </subcellularLocation>
</comment>
<comment type="similarity">
    <text evidence="1">Belongs to the complex I subunit 1 family.</text>
</comment>
<evidence type="ECO:0000255" key="1">
    <source>
        <dbReference type="HAMAP-Rule" id="MF_01350"/>
    </source>
</evidence>
<keyword id="KW-1003">Cell membrane</keyword>
<keyword id="KW-0472">Membrane</keyword>
<keyword id="KW-0520">NAD</keyword>
<keyword id="KW-0874">Quinone</keyword>
<keyword id="KW-1278">Translocase</keyword>
<keyword id="KW-0812">Transmembrane</keyword>
<keyword id="KW-1133">Transmembrane helix</keyword>
<keyword id="KW-0830">Ubiquinone</keyword>
<feature type="chain" id="PRO_1000214841" description="NADH-quinone oxidoreductase subunit H">
    <location>
        <begin position="1"/>
        <end position="333"/>
    </location>
</feature>
<feature type="transmembrane region" description="Helical" evidence="1">
    <location>
        <begin position="15"/>
        <end position="35"/>
    </location>
</feature>
<feature type="transmembrane region" description="Helical" evidence="1">
    <location>
        <begin position="88"/>
        <end position="108"/>
    </location>
</feature>
<feature type="transmembrane region" description="Helical" evidence="1">
    <location>
        <begin position="117"/>
        <end position="137"/>
    </location>
</feature>
<feature type="transmembrane region" description="Helical" evidence="1">
    <location>
        <begin position="159"/>
        <end position="179"/>
    </location>
</feature>
<feature type="transmembrane region" description="Helical" evidence="1">
    <location>
        <begin position="191"/>
        <end position="211"/>
    </location>
</feature>
<feature type="transmembrane region" description="Helical" evidence="1">
    <location>
        <begin position="250"/>
        <end position="270"/>
    </location>
</feature>
<feature type="transmembrane region" description="Helical" evidence="1">
    <location>
        <begin position="273"/>
        <end position="293"/>
    </location>
</feature>
<feature type="transmembrane region" description="Helical" evidence="1">
    <location>
        <begin position="313"/>
        <end position="333"/>
    </location>
</feature>
<sequence>MMEQLLNSAPSWTNLVIFFGLGLALLFAVLAFVTYGILAERKVMGFMQGRYGPNQVGGRWGLLQTVADVLKLLLKEDTIPKAADKPLFILAPIIAFAPAFMVLATLPFTDAFQFADIGVGLLYYIAVSGLTTIGVVAGGWASNNKYALIGAMRAAAQMISYEIPLVVSVLGVVLLTGSLNLNDIVEAQKDVWYIFIQPIAFIVFFIAAVAELNRTPFDLPEAESELVAGFHVEYSGFRWAFFMLSEYVYLFAMAALTTILFLGGWHPVMFLDFIPGAVWFALKFSIVVFVLIWFRVTFPRLRADQLMELGWKVLFPVALLNIFVTALIQELFF</sequence>
<accession>C5D984</accession>
<protein>
    <recommendedName>
        <fullName evidence="1">NADH-quinone oxidoreductase subunit H</fullName>
        <ecNumber evidence="1">7.1.1.-</ecNumber>
    </recommendedName>
    <alternativeName>
        <fullName evidence="1">NADH dehydrogenase I subunit H</fullName>
    </alternativeName>
    <alternativeName>
        <fullName evidence="1">NDH-1 subunit H</fullName>
    </alternativeName>
</protein>
<dbReference type="EC" id="7.1.1.-" evidence="1"/>
<dbReference type="EMBL" id="CP001638">
    <property type="protein sequence ID" value="ACS25937.1"/>
    <property type="molecule type" value="Genomic_DNA"/>
</dbReference>
<dbReference type="SMR" id="C5D984"/>
<dbReference type="STRING" id="471223.GWCH70_3297"/>
<dbReference type="KEGG" id="gwc:GWCH70_3297"/>
<dbReference type="eggNOG" id="COG1005">
    <property type="taxonomic scope" value="Bacteria"/>
</dbReference>
<dbReference type="HOGENOM" id="CLU_015134_0_1_9"/>
<dbReference type="OrthoDB" id="9803734at2"/>
<dbReference type="GO" id="GO:0005886">
    <property type="term" value="C:plasma membrane"/>
    <property type="evidence" value="ECO:0007669"/>
    <property type="project" value="UniProtKB-SubCell"/>
</dbReference>
<dbReference type="GO" id="GO:0003954">
    <property type="term" value="F:NADH dehydrogenase activity"/>
    <property type="evidence" value="ECO:0007669"/>
    <property type="project" value="TreeGrafter"/>
</dbReference>
<dbReference type="GO" id="GO:0016655">
    <property type="term" value="F:oxidoreductase activity, acting on NAD(P)H, quinone or similar compound as acceptor"/>
    <property type="evidence" value="ECO:0007669"/>
    <property type="project" value="UniProtKB-UniRule"/>
</dbReference>
<dbReference type="GO" id="GO:0048038">
    <property type="term" value="F:quinone binding"/>
    <property type="evidence" value="ECO:0007669"/>
    <property type="project" value="UniProtKB-KW"/>
</dbReference>
<dbReference type="GO" id="GO:0009060">
    <property type="term" value="P:aerobic respiration"/>
    <property type="evidence" value="ECO:0007669"/>
    <property type="project" value="TreeGrafter"/>
</dbReference>
<dbReference type="HAMAP" id="MF_01350">
    <property type="entry name" value="NDH1_NuoH"/>
    <property type="match status" value="1"/>
</dbReference>
<dbReference type="InterPro" id="IPR001694">
    <property type="entry name" value="NADH_UbQ_OxRdtase_su1/FPO"/>
</dbReference>
<dbReference type="InterPro" id="IPR018086">
    <property type="entry name" value="NADH_UbQ_OxRdtase_su1_CS"/>
</dbReference>
<dbReference type="NCBIfam" id="NF004741">
    <property type="entry name" value="PRK06076.1-2"/>
    <property type="match status" value="1"/>
</dbReference>
<dbReference type="PANTHER" id="PTHR11432">
    <property type="entry name" value="NADH DEHYDROGENASE SUBUNIT 1"/>
    <property type="match status" value="1"/>
</dbReference>
<dbReference type="PANTHER" id="PTHR11432:SF3">
    <property type="entry name" value="NADH-UBIQUINONE OXIDOREDUCTASE CHAIN 1"/>
    <property type="match status" value="1"/>
</dbReference>
<dbReference type="Pfam" id="PF00146">
    <property type="entry name" value="NADHdh"/>
    <property type="match status" value="1"/>
</dbReference>
<dbReference type="PROSITE" id="PS00668">
    <property type="entry name" value="COMPLEX1_ND1_2"/>
    <property type="match status" value="1"/>
</dbReference>
<organism>
    <name type="scientific">Geobacillus sp. (strain WCH70)</name>
    <dbReference type="NCBI Taxonomy" id="471223"/>
    <lineage>
        <taxon>Bacteria</taxon>
        <taxon>Bacillati</taxon>
        <taxon>Bacillota</taxon>
        <taxon>Bacilli</taxon>
        <taxon>Bacillales</taxon>
        <taxon>Anoxybacillaceae</taxon>
        <taxon>Geobacillus</taxon>
    </lineage>
</organism>
<proteinExistence type="inferred from homology"/>